<protein>
    <recommendedName>
        <fullName evidence="1">DNA mismatch repair protein MutS</fullName>
    </recommendedName>
</protein>
<accession>B5F3Y8</accession>
<reference key="1">
    <citation type="journal article" date="2011" name="J. Bacteriol.">
        <title>Comparative genomics of 28 Salmonella enterica isolates: evidence for CRISPR-mediated adaptive sublineage evolution.</title>
        <authorList>
            <person name="Fricke W.F."/>
            <person name="Mammel M.K."/>
            <person name="McDermott P.F."/>
            <person name="Tartera C."/>
            <person name="White D.G."/>
            <person name="Leclerc J.E."/>
            <person name="Ravel J."/>
            <person name="Cebula T.A."/>
        </authorList>
    </citation>
    <scope>NUCLEOTIDE SEQUENCE [LARGE SCALE GENOMIC DNA]</scope>
    <source>
        <strain>SL483</strain>
    </source>
</reference>
<gene>
    <name evidence="1" type="primary">mutS</name>
    <name type="ordered locus">SeAg_B3030</name>
</gene>
<keyword id="KW-0067">ATP-binding</keyword>
<keyword id="KW-0227">DNA damage</keyword>
<keyword id="KW-0234">DNA repair</keyword>
<keyword id="KW-0238">DNA-binding</keyword>
<keyword id="KW-0547">Nucleotide-binding</keyword>
<evidence type="ECO:0000255" key="1">
    <source>
        <dbReference type="HAMAP-Rule" id="MF_00096"/>
    </source>
</evidence>
<organism>
    <name type="scientific">Salmonella agona (strain SL483)</name>
    <dbReference type="NCBI Taxonomy" id="454166"/>
    <lineage>
        <taxon>Bacteria</taxon>
        <taxon>Pseudomonadati</taxon>
        <taxon>Pseudomonadota</taxon>
        <taxon>Gammaproteobacteria</taxon>
        <taxon>Enterobacterales</taxon>
        <taxon>Enterobacteriaceae</taxon>
        <taxon>Salmonella</taxon>
    </lineage>
</organism>
<proteinExistence type="inferred from homology"/>
<dbReference type="EMBL" id="CP001138">
    <property type="protein sequence ID" value="ACH50360.1"/>
    <property type="molecule type" value="Genomic_DNA"/>
</dbReference>
<dbReference type="RefSeq" id="WP_001005807.1">
    <property type="nucleotide sequence ID" value="NC_011149.1"/>
</dbReference>
<dbReference type="SMR" id="B5F3Y8"/>
<dbReference type="KEGG" id="sea:SeAg_B3030"/>
<dbReference type="HOGENOM" id="CLU_002472_4_0_6"/>
<dbReference type="Proteomes" id="UP000008819">
    <property type="component" value="Chromosome"/>
</dbReference>
<dbReference type="GO" id="GO:0005829">
    <property type="term" value="C:cytosol"/>
    <property type="evidence" value="ECO:0007669"/>
    <property type="project" value="TreeGrafter"/>
</dbReference>
<dbReference type="GO" id="GO:0005524">
    <property type="term" value="F:ATP binding"/>
    <property type="evidence" value="ECO:0007669"/>
    <property type="project" value="UniProtKB-UniRule"/>
</dbReference>
<dbReference type="GO" id="GO:0140664">
    <property type="term" value="F:ATP-dependent DNA damage sensor activity"/>
    <property type="evidence" value="ECO:0007669"/>
    <property type="project" value="InterPro"/>
</dbReference>
<dbReference type="GO" id="GO:0003684">
    <property type="term" value="F:damaged DNA binding"/>
    <property type="evidence" value="ECO:0007669"/>
    <property type="project" value="UniProtKB-UniRule"/>
</dbReference>
<dbReference type="GO" id="GO:0030983">
    <property type="term" value="F:mismatched DNA binding"/>
    <property type="evidence" value="ECO:0007669"/>
    <property type="project" value="InterPro"/>
</dbReference>
<dbReference type="GO" id="GO:0006298">
    <property type="term" value="P:mismatch repair"/>
    <property type="evidence" value="ECO:0007669"/>
    <property type="project" value="UniProtKB-UniRule"/>
</dbReference>
<dbReference type="CDD" id="cd03284">
    <property type="entry name" value="ABC_MutS1"/>
    <property type="match status" value="1"/>
</dbReference>
<dbReference type="FunFam" id="1.10.1420.10:FF:000002">
    <property type="entry name" value="DNA mismatch repair protein MutS"/>
    <property type="match status" value="1"/>
</dbReference>
<dbReference type="FunFam" id="3.30.420.110:FF:000001">
    <property type="entry name" value="DNA mismatch repair protein MutS"/>
    <property type="match status" value="1"/>
</dbReference>
<dbReference type="FunFam" id="3.40.1170.10:FF:000001">
    <property type="entry name" value="DNA mismatch repair protein MutS"/>
    <property type="match status" value="1"/>
</dbReference>
<dbReference type="FunFam" id="3.40.50.300:FF:000283">
    <property type="entry name" value="DNA mismatch repair protein MutS"/>
    <property type="match status" value="1"/>
</dbReference>
<dbReference type="Gene3D" id="1.10.1420.10">
    <property type="match status" value="2"/>
</dbReference>
<dbReference type="Gene3D" id="6.10.140.430">
    <property type="match status" value="1"/>
</dbReference>
<dbReference type="Gene3D" id="3.40.1170.10">
    <property type="entry name" value="DNA repair protein MutS, domain I"/>
    <property type="match status" value="1"/>
</dbReference>
<dbReference type="Gene3D" id="3.30.420.110">
    <property type="entry name" value="MutS, connector domain"/>
    <property type="match status" value="1"/>
</dbReference>
<dbReference type="Gene3D" id="3.40.50.300">
    <property type="entry name" value="P-loop containing nucleotide triphosphate hydrolases"/>
    <property type="match status" value="1"/>
</dbReference>
<dbReference type="HAMAP" id="MF_00096">
    <property type="entry name" value="MutS"/>
    <property type="match status" value="1"/>
</dbReference>
<dbReference type="InterPro" id="IPR005748">
    <property type="entry name" value="DNA_mismatch_repair_MutS"/>
</dbReference>
<dbReference type="InterPro" id="IPR007695">
    <property type="entry name" value="DNA_mismatch_repair_MutS-lik_N"/>
</dbReference>
<dbReference type="InterPro" id="IPR017261">
    <property type="entry name" value="DNA_mismatch_repair_MutS/MSH"/>
</dbReference>
<dbReference type="InterPro" id="IPR000432">
    <property type="entry name" value="DNA_mismatch_repair_MutS_C"/>
</dbReference>
<dbReference type="InterPro" id="IPR007861">
    <property type="entry name" value="DNA_mismatch_repair_MutS_clamp"/>
</dbReference>
<dbReference type="InterPro" id="IPR007696">
    <property type="entry name" value="DNA_mismatch_repair_MutS_core"/>
</dbReference>
<dbReference type="InterPro" id="IPR016151">
    <property type="entry name" value="DNA_mismatch_repair_MutS_N"/>
</dbReference>
<dbReference type="InterPro" id="IPR036187">
    <property type="entry name" value="DNA_mismatch_repair_MutS_sf"/>
</dbReference>
<dbReference type="InterPro" id="IPR007860">
    <property type="entry name" value="DNA_mmatch_repair_MutS_con_dom"/>
</dbReference>
<dbReference type="InterPro" id="IPR045076">
    <property type="entry name" value="MutS"/>
</dbReference>
<dbReference type="InterPro" id="IPR036678">
    <property type="entry name" value="MutS_con_dom_sf"/>
</dbReference>
<dbReference type="InterPro" id="IPR027417">
    <property type="entry name" value="P-loop_NTPase"/>
</dbReference>
<dbReference type="NCBIfam" id="TIGR01070">
    <property type="entry name" value="mutS1"/>
    <property type="match status" value="1"/>
</dbReference>
<dbReference type="NCBIfam" id="NF003810">
    <property type="entry name" value="PRK05399.1"/>
    <property type="match status" value="1"/>
</dbReference>
<dbReference type="PANTHER" id="PTHR11361:SF34">
    <property type="entry name" value="DNA MISMATCH REPAIR PROTEIN MSH1, MITOCHONDRIAL"/>
    <property type="match status" value="1"/>
</dbReference>
<dbReference type="PANTHER" id="PTHR11361">
    <property type="entry name" value="DNA MISMATCH REPAIR PROTEIN MUTS FAMILY MEMBER"/>
    <property type="match status" value="1"/>
</dbReference>
<dbReference type="Pfam" id="PF01624">
    <property type="entry name" value="MutS_I"/>
    <property type="match status" value="1"/>
</dbReference>
<dbReference type="Pfam" id="PF05188">
    <property type="entry name" value="MutS_II"/>
    <property type="match status" value="1"/>
</dbReference>
<dbReference type="Pfam" id="PF05192">
    <property type="entry name" value="MutS_III"/>
    <property type="match status" value="1"/>
</dbReference>
<dbReference type="Pfam" id="PF05190">
    <property type="entry name" value="MutS_IV"/>
    <property type="match status" value="1"/>
</dbReference>
<dbReference type="Pfam" id="PF00488">
    <property type="entry name" value="MutS_V"/>
    <property type="match status" value="1"/>
</dbReference>
<dbReference type="PIRSF" id="PIRSF037677">
    <property type="entry name" value="DNA_mis_repair_Msh6"/>
    <property type="match status" value="1"/>
</dbReference>
<dbReference type="SMART" id="SM00534">
    <property type="entry name" value="MUTSac"/>
    <property type="match status" value="1"/>
</dbReference>
<dbReference type="SMART" id="SM00533">
    <property type="entry name" value="MUTSd"/>
    <property type="match status" value="1"/>
</dbReference>
<dbReference type="SUPFAM" id="SSF55271">
    <property type="entry name" value="DNA repair protein MutS, domain I"/>
    <property type="match status" value="1"/>
</dbReference>
<dbReference type="SUPFAM" id="SSF53150">
    <property type="entry name" value="DNA repair protein MutS, domain II"/>
    <property type="match status" value="1"/>
</dbReference>
<dbReference type="SUPFAM" id="SSF48334">
    <property type="entry name" value="DNA repair protein MutS, domain III"/>
    <property type="match status" value="1"/>
</dbReference>
<dbReference type="SUPFAM" id="SSF52540">
    <property type="entry name" value="P-loop containing nucleoside triphosphate hydrolases"/>
    <property type="match status" value="1"/>
</dbReference>
<dbReference type="PROSITE" id="PS00486">
    <property type="entry name" value="DNA_MISMATCH_REPAIR_2"/>
    <property type="match status" value="1"/>
</dbReference>
<name>MUTS_SALA4</name>
<comment type="function">
    <text evidence="1">This protein is involved in the repair of mismatches in DNA. It is possible that it carries out the mismatch recognition step. This protein has a weak ATPase activity.</text>
</comment>
<comment type="similarity">
    <text evidence="1">Belongs to the DNA mismatch repair MutS family.</text>
</comment>
<feature type="chain" id="PRO_1000093640" description="DNA mismatch repair protein MutS">
    <location>
        <begin position="1"/>
        <end position="855"/>
    </location>
</feature>
<feature type="binding site" evidence="1">
    <location>
        <begin position="616"/>
        <end position="623"/>
    </location>
    <ligand>
        <name>ATP</name>
        <dbReference type="ChEBI" id="CHEBI:30616"/>
    </ligand>
</feature>
<sequence length="855" mass="95407">MNESFDKDFSNHTPMMQQYLKLKAQHPEILLFYRMGDFYELFYDDAKRASQLLDISLTKRGASAGEPIPMAGIPHHAVENYLAKLVNQGESVAICEQIGDPATSKGPVERKVVRIVTPGTISDEALLQERQDNLLAAIWQDGKGYGYATLDISSGRFRLSEPADRETMAAELQRTNPAELLYAEDFAEMALIEGRRGLRRRPLWEFEIDTARQQLNLQFGTRDLVGFGVENASRGLCAAGCLLQYVKDTQRTSLPHIRSITMERQQDSIIMDAATRRNLEITQNLAGGVENTLAAVLDCTVTPMGSRMLKRWLHMPVRNTDILRERQQTIGALQDTVSELQPVLRQVGDLERILARLALRTARPRDLARMRHAFQQLPELHAQLETVDSAPVQALRKKMGDFAELRDLLERAIIDAPPVLVRDGGVIAPGYHEELDEWRALADGATDYLDRLEIRERERTGLDTLKVGYNAVHGYYIQISRGQSHLAPINYVRRQTLKNAERYIIPELKEYEDKVLTSKGKALALEKQLYDELFDLLLPHLADLQQSANALAELDVLVNLAERAWTLNYTCPTFTDKPGIRITEGRHPVVEQVLNEPFIANPLNLSPQRRMLIITGPNMGGKSTYMRQTALIALLAYIGSYVPAQNVEIGPIDRIFTRVGAADDLASGRSTFMVEMTETANILHNATENSLVLMDEIGRGTSTYDGLSLAWACAENLANKIKALTLFATHYFELTQLPEKMEGVANVHLDALEHGDTIAFMHSVQDGAASKSYGLAVAALAGVPKEVIKRARQKLRELESISPNAAATQVDGTQMSLLAAPEETSPAVEALENLDPDSLTPRQALEWIYRLKSLV</sequence>